<evidence type="ECO:0000255" key="1">
    <source>
        <dbReference type="HAMAP-Rule" id="MF_03047"/>
    </source>
</evidence>
<organism>
    <name type="scientific">Vanderwaltozyma polyspora (strain ATCC 22028 / DSM 70294 / BCRC 21397 / CBS 2163 / NBRC 10782 / NRRL Y-8283 / UCD 57-17)</name>
    <name type="common">Kluyveromyces polysporus</name>
    <dbReference type="NCBI Taxonomy" id="436907"/>
    <lineage>
        <taxon>Eukaryota</taxon>
        <taxon>Fungi</taxon>
        <taxon>Dikarya</taxon>
        <taxon>Ascomycota</taxon>
        <taxon>Saccharomycotina</taxon>
        <taxon>Saccharomycetes</taxon>
        <taxon>Saccharomycetales</taxon>
        <taxon>Saccharomycetaceae</taxon>
        <taxon>Vanderwaltozyma</taxon>
    </lineage>
</organism>
<keyword id="KW-0010">Activator</keyword>
<keyword id="KW-0156">Chromatin regulator</keyword>
<keyword id="KW-0479">Metal-binding</keyword>
<keyword id="KW-0539">Nucleus</keyword>
<keyword id="KW-1185">Reference proteome</keyword>
<keyword id="KW-0804">Transcription</keyword>
<keyword id="KW-0805">Transcription regulation</keyword>
<keyword id="KW-0862">Zinc</keyword>
<keyword id="KW-0863">Zinc-finger</keyword>
<sequence length="96" mass="11167">MTQSIDSMSISIYENLISTMIQDIVSREVVHQKQMQSRYPQLKQYSIDPNGNIDINGNTKQQDSSQYFHCKNCGRDVSANRFAAHLQRCLNSRQRR</sequence>
<proteinExistence type="inferred from homology"/>
<comment type="function">
    <text evidence="1">Functions as a component of the transcription regulatory histone acetylation (HAT) complex SAGA. At the promoters, SAGA is required for recruitment of the basal transcription machinery. It influences RNA polymerase II transcriptional activity through different activities such as TBP interaction and promoter selectivity, interaction with transcription activators, and chromatin modification through histone acetylation and deubiquitination. SAGA acetylates nucleosomal histone H3 to some extent (to form H3K9ac, H3K14ac, H3K18ac and H3K23ac). SAGA interacts with DNA via upstream activating sequences (UASs). Involved in transcriptional regulation of a subset of SAGA-regulated genes. Within the SAGA complex, participates in a subcomplex, that specifically deubiquitinates histones H2B.</text>
</comment>
<comment type="subunit">
    <text evidence="1">Component of the 1.8 MDa SAGA transcription coactivator-HAT complex. SAGA is built of 5 distinct domains with specialized functions. Within the SAGA complex, SUS1, SGF11, SGF73 and UBP8 form an additional subcomplex of SAGA called the DUB module (deubiquitination module). Interacts directly with SGF73, SUS1 and UBP8.</text>
</comment>
<comment type="subcellular location">
    <subcellularLocation>
        <location evidence="1">Nucleus</location>
    </subcellularLocation>
</comment>
<comment type="domain">
    <text evidence="1">The long N-terminal helix forms part of the 'assembly lobe' of the SAGA deubiquitination module.</text>
</comment>
<comment type="domain">
    <text evidence="1">The C-terminal SGF11-type zinc-finger domain together with the C-terminal catalytic domain of UBP8 forms the 'catalytic lobe' of the SAGA deubiquitination module.</text>
</comment>
<comment type="similarity">
    <text evidence="1">Belongs to the SGF11 family.</text>
</comment>
<name>SGF11_VANPO</name>
<protein>
    <recommendedName>
        <fullName evidence="1">SAGA-associated factor 11</fullName>
    </recommendedName>
</protein>
<reference key="1">
    <citation type="journal article" date="2007" name="Proc. Natl. Acad. Sci. U.S.A.">
        <title>Independent sorting-out of thousands of duplicated gene pairs in two yeast species descended from a whole-genome duplication.</title>
        <authorList>
            <person name="Scannell D.R."/>
            <person name="Frank A.C."/>
            <person name="Conant G.C."/>
            <person name="Byrne K.P."/>
            <person name="Woolfit M."/>
            <person name="Wolfe K.H."/>
        </authorList>
    </citation>
    <scope>NUCLEOTIDE SEQUENCE [LARGE SCALE GENOMIC DNA]</scope>
    <source>
        <strain>ATCC 22028 / DSM 70294 / BCRC 21397 / CBS 2163 / NBRC 10782 / NRRL Y-8283 / UCD 57-17</strain>
    </source>
</reference>
<feature type="chain" id="PRO_0000367543" description="SAGA-associated factor 11">
    <location>
        <begin position="1"/>
        <end position="96"/>
    </location>
</feature>
<feature type="zinc finger region" description="SGF11-type" evidence="1">
    <location>
        <begin position="68"/>
        <end position="89"/>
    </location>
</feature>
<dbReference type="EMBL" id="DS480516">
    <property type="protein sequence ID" value="EDO14736.1"/>
    <property type="molecule type" value="Genomic_DNA"/>
</dbReference>
<dbReference type="RefSeq" id="XP_001642594.1">
    <property type="nucleotide sequence ID" value="XM_001642544.1"/>
</dbReference>
<dbReference type="SMR" id="A7TSM3"/>
<dbReference type="FunCoup" id="A7TSM3">
    <property type="interactions" value="312"/>
</dbReference>
<dbReference type="STRING" id="436907.A7TSM3"/>
<dbReference type="GeneID" id="5542757"/>
<dbReference type="KEGG" id="vpo:Kpol_333p6"/>
<dbReference type="eggNOG" id="KOG2612">
    <property type="taxonomic scope" value="Eukaryota"/>
</dbReference>
<dbReference type="HOGENOM" id="CLU_2320099_0_0_1"/>
<dbReference type="InParanoid" id="A7TSM3"/>
<dbReference type="OMA" id="SSQYFHC"/>
<dbReference type="OrthoDB" id="21557at2759"/>
<dbReference type="PhylomeDB" id="A7TSM3"/>
<dbReference type="Proteomes" id="UP000000267">
    <property type="component" value="Unassembled WGS sequence"/>
</dbReference>
<dbReference type="GO" id="GO:0071819">
    <property type="term" value="C:DUBm complex"/>
    <property type="evidence" value="ECO:0007669"/>
    <property type="project" value="UniProtKB-UniRule"/>
</dbReference>
<dbReference type="GO" id="GO:0000124">
    <property type="term" value="C:SAGA complex"/>
    <property type="evidence" value="ECO:0007669"/>
    <property type="project" value="UniProtKB-UniRule"/>
</dbReference>
<dbReference type="GO" id="GO:0046695">
    <property type="term" value="C:SLIK (SAGA-like) complex"/>
    <property type="evidence" value="ECO:0007669"/>
    <property type="project" value="EnsemblFungi"/>
</dbReference>
<dbReference type="GO" id="GO:0008047">
    <property type="term" value="F:enzyme activator activity"/>
    <property type="evidence" value="ECO:0007669"/>
    <property type="project" value="EnsemblFungi"/>
</dbReference>
<dbReference type="GO" id="GO:0003713">
    <property type="term" value="F:transcription coactivator activity"/>
    <property type="evidence" value="ECO:0007669"/>
    <property type="project" value="UniProtKB-UniRule"/>
</dbReference>
<dbReference type="GO" id="GO:0008270">
    <property type="term" value="F:zinc ion binding"/>
    <property type="evidence" value="ECO:0007669"/>
    <property type="project" value="UniProtKB-UniRule"/>
</dbReference>
<dbReference type="GO" id="GO:0006325">
    <property type="term" value="P:chromatin organization"/>
    <property type="evidence" value="ECO:0007669"/>
    <property type="project" value="UniProtKB-KW"/>
</dbReference>
<dbReference type="GO" id="GO:0006357">
    <property type="term" value="P:regulation of transcription by RNA polymerase II"/>
    <property type="evidence" value="ECO:0007669"/>
    <property type="project" value="EnsemblFungi"/>
</dbReference>
<dbReference type="Gene3D" id="1.10.287.210">
    <property type="match status" value="1"/>
</dbReference>
<dbReference type="Gene3D" id="3.30.160.60">
    <property type="entry name" value="Classic Zinc Finger"/>
    <property type="match status" value="1"/>
</dbReference>
<dbReference type="HAMAP" id="MF_03047">
    <property type="entry name" value="Sgf11"/>
    <property type="match status" value="1"/>
</dbReference>
<dbReference type="InterPro" id="IPR013246">
    <property type="entry name" value="SAGA_su_Sgf11"/>
</dbReference>
<dbReference type="InterPro" id="IPR041216">
    <property type="entry name" value="Sgf11_N"/>
</dbReference>
<dbReference type="Pfam" id="PF08209">
    <property type="entry name" value="Sgf11"/>
    <property type="match status" value="1"/>
</dbReference>
<dbReference type="Pfam" id="PF18519">
    <property type="entry name" value="Sgf11_N"/>
    <property type="match status" value="1"/>
</dbReference>
<gene>
    <name evidence="1" type="primary">SGF11</name>
    <name type="ORF">Kpol_333p6</name>
</gene>
<accession>A7TSM3</accession>